<proteinExistence type="inferred from homology"/>
<feature type="chain" id="PRO_0000124317" description="Small ribosomal subunit protein uS7">
    <location>
        <begin position="1"/>
        <end position="158"/>
    </location>
</feature>
<protein>
    <recommendedName>
        <fullName evidence="1">Small ribosomal subunit protein uS7</fullName>
    </recommendedName>
    <alternativeName>
        <fullName evidence="2">30S ribosomal protein S7</fullName>
    </alternativeName>
</protein>
<name>RS7_PORGI</name>
<accession>Q7MTL0</accession>
<keyword id="KW-1185">Reference proteome</keyword>
<keyword id="KW-0687">Ribonucleoprotein</keyword>
<keyword id="KW-0689">Ribosomal protein</keyword>
<keyword id="KW-0694">RNA-binding</keyword>
<keyword id="KW-0699">rRNA-binding</keyword>
<keyword id="KW-0820">tRNA-binding</keyword>
<reference key="1">
    <citation type="journal article" date="2003" name="J. Bacteriol.">
        <title>Complete genome sequence of the oral pathogenic bacterium Porphyromonas gingivalis strain W83.</title>
        <authorList>
            <person name="Nelson K.E."/>
            <person name="Fleischmann R.D."/>
            <person name="DeBoy R.T."/>
            <person name="Paulsen I.T."/>
            <person name="Fouts D.E."/>
            <person name="Eisen J.A."/>
            <person name="Daugherty S.C."/>
            <person name="Dodson R.J."/>
            <person name="Durkin A.S."/>
            <person name="Gwinn M.L."/>
            <person name="Haft D.H."/>
            <person name="Kolonay J.F."/>
            <person name="Nelson W.C."/>
            <person name="Mason T.M."/>
            <person name="Tallon L."/>
            <person name="Gray J."/>
            <person name="Granger D."/>
            <person name="Tettelin H."/>
            <person name="Dong H."/>
            <person name="Galvin J.L."/>
            <person name="Duncan M.J."/>
            <person name="Dewhirst F.E."/>
            <person name="Fraser C.M."/>
        </authorList>
    </citation>
    <scope>NUCLEOTIDE SEQUENCE [LARGE SCALE GENOMIC DNA]</scope>
    <source>
        <strain>ATCC BAA-308 / W83</strain>
    </source>
</reference>
<dbReference type="EMBL" id="AE015924">
    <property type="protein sequence ID" value="AAQ66922.1"/>
    <property type="molecule type" value="Genomic_DNA"/>
</dbReference>
<dbReference type="RefSeq" id="WP_010956450.1">
    <property type="nucleotide sequence ID" value="NC_002950.2"/>
</dbReference>
<dbReference type="SMR" id="Q7MTL0"/>
<dbReference type="STRING" id="242619.PG_1941"/>
<dbReference type="EnsemblBacteria" id="AAQ66922">
    <property type="protein sequence ID" value="AAQ66922"/>
    <property type="gene ID" value="PG_1941"/>
</dbReference>
<dbReference type="KEGG" id="pgi:PG_1941"/>
<dbReference type="PATRIC" id="fig|242619.8.peg.1795"/>
<dbReference type="eggNOG" id="COG0049">
    <property type="taxonomic scope" value="Bacteria"/>
</dbReference>
<dbReference type="HOGENOM" id="CLU_072226_1_1_10"/>
<dbReference type="BioCyc" id="PGIN242619:G1G02-1813-MONOMER"/>
<dbReference type="Proteomes" id="UP000000588">
    <property type="component" value="Chromosome"/>
</dbReference>
<dbReference type="GO" id="GO:0015935">
    <property type="term" value="C:small ribosomal subunit"/>
    <property type="evidence" value="ECO:0007669"/>
    <property type="project" value="InterPro"/>
</dbReference>
<dbReference type="GO" id="GO:0019843">
    <property type="term" value="F:rRNA binding"/>
    <property type="evidence" value="ECO:0007669"/>
    <property type="project" value="UniProtKB-UniRule"/>
</dbReference>
<dbReference type="GO" id="GO:0003735">
    <property type="term" value="F:structural constituent of ribosome"/>
    <property type="evidence" value="ECO:0007669"/>
    <property type="project" value="InterPro"/>
</dbReference>
<dbReference type="GO" id="GO:0000049">
    <property type="term" value="F:tRNA binding"/>
    <property type="evidence" value="ECO:0007669"/>
    <property type="project" value="UniProtKB-UniRule"/>
</dbReference>
<dbReference type="GO" id="GO:0006412">
    <property type="term" value="P:translation"/>
    <property type="evidence" value="ECO:0007669"/>
    <property type="project" value="UniProtKB-UniRule"/>
</dbReference>
<dbReference type="CDD" id="cd14869">
    <property type="entry name" value="uS7_Bacteria"/>
    <property type="match status" value="1"/>
</dbReference>
<dbReference type="FunFam" id="1.10.455.10:FF:000001">
    <property type="entry name" value="30S ribosomal protein S7"/>
    <property type="match status" value="1"/>
</dbReference>
<dbReference type="Gene3D" id="1.10.455.10">
    <property type="entry name" value="Ribosomal protein S7 domain"/>
    <property type="match status" value="1"/>
</dbReference>
<dbReference type="HAMAP" id="MF_00480_B">
    <property type="entry name" value="Ribosomal_uS7_B"/>
    <property type="match status" value="1"/>
</dbReference>
<dbReference type="InterPro" id="IPR000235">
    <property type="entry name" value="Ribosomal_uS7"/>
</dbReference>
<dbReference type="InterPro" id="IPR005717">
    <property type="entry name" value="Ribosomal_uS7_bac/org-type"/>
</dbReference>
<dbReference type="InterPro" id="IPR023798">
    <property type="entry name" value="Ribosomal_uS7_dom"/>
</dbReference>
<dbReference type="InterPro" id="IPR036823">
    <property type="entry name" value="Ribosomal_uS7_dom_sf"/>
</dbReference>
<dbReference type="NCBIfam" id="TIGR01029">
    <property type="entry name" value="rpsG_bact"/>
    <property type="match status" value="1"/>
</dbReference>
<dbReference type="PANTHER" id="PTHR11205">
    <property type="entry name" value="RIBOSOMAL PROTEIN S7"/>
    <property type="match status" value="1"/>
</dbReference>
<dbReference type="Pfam" id="PF00177">
    <property type="entry name" value="Ribosomal_S7"/>
    <property type="match status" value="1"/>
</dbReference>
<dbReference type="PIRSF" id="PIRSF002122">
    <property type="entry name" value="RPS7p_RPS7a_RPS5e_RPS7o"/>
    <property type="match status" value="1"/>
</dbReference>
<dbReference type="SUPFAM" id="SSF47973">
    <property type="entry name" value="Ribosomal protein S7"/>
    <property type="match status" value="1"/>
</dbReference>
<evidence type="ECO:0000255" key="1">
    <source>
        <dbReference type="HAMAP-Rule" id="MF_00480"/>
    </source>
</evidence>
<evidence type="ECO:0000305" key="2"/>
<organism>
    <name type="scientific">Porphyromonas gingivalis (strain ATCC BAA-308 / W83)</name>
    <dbReference type="NCBI Taxonomy" id="242619"/>
    <lineage>
        <taxon>Bacteria</taxon>
        <taxon>Pseudomonadati</taxon>
        <taxon>Bacteroidota</taxon>
        <taxon>Bacteroidia</taxon>
        <taxon>Bacteroidales</taxon>
        <taxon>Porphyromonadaceae</taxon>
        <taxon>Porphyromonas</taxon>
    </lineage>
</organism>
<sequence>MRKAKPKKRQILPDPVYGDVRVTKFVNHLMYDGKKNTAFSIFYGALDIVKTKHSNEEKSALEIWKAALDNITPQVEVKSRRIGGATFQVPTEIRPERKESISMKNLILYARKRGGKTMADKLAAEIVDAFNNQGAAFKRKEDMHRMAEANRAFAHFRF</sequence>
<comment type="function">
    <text evidence="1">One of the primary rRNA binding proteins, it binds directly to 16S rRNA where it nucleates assembly of the head domain of the 30S subunit. Is located at the subunit interface close to the decoding center, probably blocks exit of the E-site tRNA.</text>
</comment>
<comment type="subunit">
    <text evidence="1">Part of the 30S ribosomal subunit. Contacts proteins S9 and S11.</text>
</comment>
<comment type="similarity">
    <text evidence="1">Belongs to the universal ribosomal protein uS7 family.</text>
</comment>
<gene>
    <name evidence="1" type="primary">rpsG</name>
    <name type="ordered locus">PG_1941</name>
</gene>